<dbReference type="EMBL" id="BA000035">
    <property type="protein sequence ID" value="BAC18742.1"/>
    <property type="status" value="ALT_INIT"/>
    <property type="molecule type" value="Genomic_DNA"/>
</dbReference>
<dbReference type="RefSeq" id="WP_006767931.1">
    <property type="nucleotide sequence ID" value="NC_004369.1"/>
</dbReference>
<dbReference type="SMR" id="Q8FP56"/>
<dbReference type="STRING" id="196164.gene:10742360"/>
<dbReference type="KEGG" id="cef:CE1932"/>
<dbReference type="eggNOG" id="COG0335">
    <property type="taxonomic scope" value="Bacteria"/>
</dbReference>
<dbReference type="HOGENOM" id="CLU_103507_2_1_11"/>
<dbReference type="OrthoDB" id="9803541at2"/>
<dbReference type="Proteomes" id="UP000001409">
    <property type="component" value="Chromosome"/>
</dbReference>
<dbReference type="GO" id="GO:0022625">
    <property type="term" value="C:cytosolic large ribosomal subunit"/>
    <property type="evidence" value="ECO:0007669"/>
    <property type="project" value="TreeGrafter"/>
</dbReference>
<dbReference type="GO" id="GO:0003735">
    <property type="term" value="F:structural constituent of ribosome"/>
    <property type="evidence" value="ECO:0007669"/>
    <property type="project" value="InterPro"/>
</dbReference>
<dbReference type="GO" id="GO:0006412">
    <property type="term" value="P:translation"/>
    <property type="evidence" value="ECO:0007669"/>
    <property type="project" value="UniProtKB-UniRule"/>
</dbReference>
<dbReference type="FunFam" id="2.30.30.790:FF:000001">
    <property type="entry name" value="50S ribosomal protein L19"/>
    <property type="match status" value="1"/>
</dbReference>
<dbReference type="Gene3D" id="2.30.30.790">
    <property type="match status" value="1"/>
</dbReference>
<dbReference type="HAMAP" id="MF_00402">
    <property type="entry name" value="Ribosomal_bL19"/>
    <property type="match status" value="1"/>
</dbReference>
<dbReference type="InterPro" id="IPR001857">
    <property type="entry name" value="Ribosomal_bL19"/>
</dbReference>
<dbReference type="InterPro" id="IPR018257">
    <property type="entry name" value="Ribosomal_bL19_CS"/>
</dbReference>
<dbReference type="InterPro" id="IPR038657">
    <property type="entry name" value="Ribosomal_bL19_sf"/>
</dbReference>
<dbReference type="InterPro" id="IPR008991">
    <property type="entry name" value="Translation_prot_SH3-like_sf"/>
</dbReference>
<dbReference type="NCBIfam" id="TIGR01024">
    <property type="entry name" value="rplS_bact"/>
    <property type="match status" value="1"/>
</dbReference>
<dbReference type="PANTHER" id="PTHR15680:SF9">
    <property type="entry name" value="LARGE RIBOSOMAL SUBUNIT PROTEIN BL19M"/>
    <property type="match status" value="1"/>
</dbReference>
<dbReference type="PANTHER" id="PTHR15680">
    <property type="entry name" value="RIBOSOMAL PROTEIN L19"/>
    <property type="match status" value="1"/>
</dbReference>
<dbReference type="Pfam" id="PF01245">
    <property type="entry name" value="Ribosomal_L19"/>
    <property type="match status" value="1"/>
</dbReference>
<dbReference type="PIRSF" id="PIRSF002191">
    <property type="entry name" value="Ribosomal_L19"/>
    <property type="match status" value="1"/>
</dbReference>
<dbReference type="PRINTS" id="PR00061">
    <property type="entry name" value="RIBOSOMALL19"/>
</dbReference>
<dbReference type="SUPFAM" id="SSF50104">
    <property type="entry name" value="Translation proteins SH3-like domain"/>
    <property type="match status" value="1"/>
</dbReference>
<dbReference type="PROSITE" id="PS01015">
    <property type="entry name" value="RIBOSOMAL_L19"/>
    <property type="match status" value="1"/>
</dbReference>
<evidence type="ECO:0000255" key="1">
    <source>
        <dbReference type="HAMAP-Rule" id="MF_00402"/>
    </source>
</evidence>
<evidence type="ECO:0000305" key="2"/>
<reference key="1">
    <citation type="journal article" date="2003" name="Genome Res.">
        <title>Comparative complete genome sequence analysis of the amino acid replacements responsible for the thermostability of Corynebacterium efficiens.</title>
        <authorList>
            <person name="Nishio Y."/>
            <person name="Nakamura Y."/>
            <person name="Kawarabayasi Y."/>
            <person name="Usuda Y."/>
            <person name="Kimura E."/>
            <person name="Sugimoto S."/>
            <person name="Matsui K."/>
            <person name="Yamagishi A."/>
            <person name="Kikuchi H."/>
            <person name="Ikeo K."/>
            <person name="Gojobori T."/>
        </authorList>
    </citation>
    <scope>NUCLEOTIDE SEQUENCE [LARGE SCALE GENOMIC DNA]</scope>
    <source>
        <strain>DSM 44549 / YS-314 / AJ 12310 / JCM 11189 / NBRC 100395</strain>
    </source>
</reference>
<comment type="function">
    <text evidence="1">This protein is located at the 30S-50S ribosomal subunit interface and may play a role in the structure and function of the aminoacyl-tRNA binding site.</text>
</comment>
<comment type="similarity">
    <text evidence="1">Belongs to the bacterial ribosomal protein bL19 family.</text>
</comment>
<comment type="sequence caution" evidence="2">
    <conflict type="erroneous initiation">
        <sequence resource="EMBL-CDS" id="BAC18742"/>
    </conflict>
</comment>
<accession>Q8FP56</accession>
<sequence length="113" mass="13008">MNILDKVDSAYLRDDVPAFRPGDTLDVHVKVIEGTNTRTQLFKGVVIRRQGSGIRETFTVRKVSFGIGVERTFPVHSPNLEKIEVVRRGDVRRAKLYYLRELRGKAARIKEKR</sequence>
<feature type="chain" id="PRO_0000163445" description="Large ribosomal subunit protein bL19">
    <location>
        <begin position="1"/>
        <end position="113"/>
    </location>
</feature>
<gene>
    <name evidence="1" type="primary">rplS</name>
    <name type="ordered locus">CE1932</name>
</gene>
<keyword id="KW-1185">Reference proteome</keyword>
<keyword id="KW-0687">Ribonucleoprotein</keyword>
<keyword id="KW-0689">Ribosomal protein</keyword>
<protein>
    <recommendedName>
        <fullName evidence="1">Large ribosomal subunit protein bL19</fullName>
    </recommendedName>
    <alternativeName>
        <fullName evidence="2">50S ribosomal protein L19</fullName>
    </alternativeName>
</protein>
<name>RL19_COREF</name>
<proteinExistence type="inferred from homology"/>
<organism>
    <name type="scientific">Corynebacterium efficiens (strain DSM 44549 / YS-314 / AJ 12310 / JCM 11189 / NBRC 100395)</name>
    <dbReference type="NCBI Taxonomy" id="196164"/>
    <lineage>
        <taxon>Bacteria</taxon>
        <taxon>Bacillati</taxon>
        <taxon>Actinomycetota</taxon>
        <taxon>Actinomycetes</taxon>
        <taxon>Mycobacteriales</taxon>
        <taxon>Corynebacteriaceae</taxon>
        <taxon>Corynebacterium</taxon>
    </lineage>
</organism>